<proteinExistence type="evidence at protein level"/>
<feature type="transit peptide" description="Chloroplast" evidence="10 11">
    <location>
        <begin position="1"/>
        <end position="54"/>
    </location>
</feature>
<feature type="chain" id="PRO_0000011763" description="4-hydroxy-7-methoxy-3-oxo-3,4-dihydro-2H-1,4-benzoxazin-2-yl glucoside beta-D-glucosidase 1, chloroplastic">
    <location>
        <begin position="55"/>
        <end position="566"/>
    </location>
</feature>
<feature type="region of interest" description="Disordered" evidence="3">
    <location>
        <begin position="17"/>
        <end position="47"/>
    </location>
</feature>
<feature type="region of interest" description="Dimerization">
    <location>
        <begin position="325"/>
        <end position="361"/>
    </location>
</feature>
<feature type="region of interest" description="Dimerization">
    <location>
        <begin position="394"/>
        <end position="405"/>
    </location>
</feature>
<feature type="region of interest" description="Dimerization">
    <location>
        <begin position="450"/>
        <end position="453"/>
    </location>
</feature>
<feature type="active site" description="Proton donor" evidence="1">
    <location>
        <position position="245"/>
    </location>
</feature>
<feature type="active site" description="Nucleophile" evidence="1">
    <location>
        <position position="460"/>
    </location>
</feature>
<feature type="binding site" evidence="14 15 17 18">
    <location>
        <position position="92"/>
    </location>
    <ligand>
        <name>a beta-D-glucoside</name>
        <dbReference type="ChEBI" id="CHEBI:22798"/>
    </ligand>
</feature>
<feature type="binding site" evidence="14 17">
    <location>
        <position position="196"/>
    </location>
    <ligand>
        <name>a beta-D-glucoside</name>
        <dbReference type="ChEBI" id="CHEBI:22798"/>
    </ligand>
</feature>
<feature type="binding site" evidence="14 17">
    <location>
        <begin position="244"/>
        <end position="245"/>
    </location>
    <ligand>
        <name>a beta-D-glucoside</name>
        <dbReference type="ChEBI" id="CHEBI:22798"/>
    </ligand>
</feature>
<feature type="binding site" evidence="14 17">
    <location>
        <position position="387"/>
    </location>
    <ligand>
        <name>a beta-D-glucoside</name>
        <dbReference type="ChEBI" id="CHEBI:22798"/>
    </ligand>
</feature>
<feature type="binding site" evidence="2">
    <location>
        <position position="460"/>
    </location>
    <ligand>
        <name>a beta-D-glucoside</name>
        <dbReference type="ChEBI" id="CHEBI:22798"/>
    </ligand>
</feature>
<feature type="binding site" evidence="14 15 16 17 18">
    <location>
        <position position="511"/>
    </location>
    <ligand>
        <name>a beta-D-glucoside</name>
        <dbReference type="ChEBI" id="CHEBI:22798"/>
    </ligand>
</feature>
<feature type="binding site" evidence="14 15 16 17 18">
    <location>
        <begin position="518"/>
        <end position="519"/>
    </location>
    <ligand>
        <name>a beta-D-glucoside</name>
        <dbReference type="ChEBI" id="CHEBI:22798"/>
    </ligand>
</feature>
<feature type="binding site" evidence="14 17">
    <location>
        <position position="527"/>
    </location>
    <ligand>
        <name>a beta-D-glucoside</name>
        <dbReference type="ChEBI" id="CHEBI:22798"/>
    </ligand>
</feature>
<feature type="disulfide bond" evidence="7 8 9">
    <location>
        <begin position="264"/>
        <end position="270"/>
    </location>
</feature>
<feature type="mutagenesis site" description="Loss of activity." evidence="6 8 9">
    <original>E</original>
    <variation>D</variation>
    <variation>Q</variation>
    <location>
        <position position="245"/>
    </location>
</feature>
<feature type="mutagenesis site" description="Reduced substrate affinity." evidence="8">
    <original>F</original>
    <variation>I</variation>
    <variation>W</variation>
    <variation>Y</variation>
    <location>
        <position position="252"/>
    </location>
</feature>
<feature type="mutagenesis site" description="Loss of activity due to impaired dimerization.">
    <original>C</original>
    <variation>A</variation>
    <variation>D</variation>
    <variation>R</variation>
    <variation>S</variation>
    <location>
        <position position="264"/>
    </location>
</feature>
<feature type="mutagenesis site" description="Loss of activity due to impaired dimerization.">
    <original>C</original>
    <variation>A</variation>
    <variation>D</variation>
    <variation>R</variation>
    <variation>S</variation>
    <location>
        <position position="270"/>
    </location>
</feature>
<feature type="mutagenesis site" description="No effect." evidence="8">
    <original>M</original>
    <variation>F</variation>
    <variation>I</variation>
    <variation>V</variation>
    <location>
        <position position="317"/>
    </location>
</feature>
<feature type="mutagenesis site" description="Loss of activity and impaired dimerization." evidence="8">
    <original>E</original>
    <variation>D</variation>
    <location>
        <position position="460"/>
    </location>
</feature>
<feature type="mutagenesis site" description="Loss of activity." evidence="8">
    <original>E</original>
    <variation>Q</variation>
    <location>
        <position position="460"/>
    </location>
</feature>
<feature type="mutagenesis site" description="Loss of activity due to impaired dimerization." evidence="8">
    <original>I</original>
    <variation>D</variation>
    <location>
        <position position="463"/>
    </location>
</feature>
<feature type="sequence conflict" description="In Ref. 2; CAA52293." evidence="13" ref="2">
    <original>A</original>
    <variation>D</variation>
    <location>
        <position position="477"/>
    </location>
</feature>
<feature type="sequence conflict" description="In Ref. 2; CAA52293." evidence="13" ref="2">
    <original>E</original>
    <variation>Q</variation>
    <location>
        <position position="551"/>
    </location>
</feature>
<feature type="sequence conflict" description="In Ref. 2; CAA52293." evidence="13" ref="2">
    <original>T</original>
    <variation>A</variation>
    <location>
        <position position="554"/>
    </location>
</feature>
<feature type="helix" evidence="20">
    <location>
        <begin position="69"/>
        <end position="71"/>
    </location>
</feature>
<feature type="helix" evidence="20">
    <location>
        <begin position="75"/>
        <end position="77"/>
    </location>
</feature>
<feature type="strand" evidence="20">
    <location>
        <begin position="83"/>
        <end position="87"/>
    </location>
</feature>
<feature type="helix" evidence="20">
    <location>
        <begin position="90"/>
        <end position="93"/>
    </location>
</feature>
<feature type="helix" evidence="19">
    <location>
        <begin position="99"/>
        <end position="101"/>
    </location>
</feature>
<feature type="helix" evidence="20">
    <location>
        <begin position="106"/>
        <end position="113"/>
    </location>
</feature>
<feature type="helix" evidence="20">
    <location>
        <begin position="115"/>
        <end position="117"/>
    </location>
</feature>
<feature type="helix" evidence="20">
    <location>
        <begin position="130"/>
        <end position="143"/>
    </location>
</feature>
<feature type="strand" evidence="20">
    <location>
        <begin position="147"/>
        <end position="152"/>
    </location>
</feature>
<feature type="helix" evidence="20">
    <location>
        <begin position="155"/>
        <end position="158"/>
    </location>
</feature>
<feature type="turn" evidence="20">
    <location>
        <begin position="164"/>
        <end position="166"/>
    </location>
</feature>
<feature type="helix" evidence="20">
    <location>
        <begin position="170"/>
        <end position="185"/>
    </location>
</feature>
<feature type="strand" evidence="20">
    <location>
        <begin position="189"/>
        <end position="197"/>
    </location>
</feature>
<feature type="helix" evidence="20">
    <location>
        <begin position="201"/>
        <end position="207"/>
    </location>
</feature>
<feature type="helix" evidence="20">
    <location>
        <begin position="209"/>
        <end position="211"/>
    </location>
</feature>
<feature type="helix" evidence="20">
    <location>
        <begin position="217"/>
        <end position="233"/>
    </location>
</feature>
<feature type="turn" evidence="20">
    <location>
        <begin position="234"/>
        <end position="236"/>
    </location>
</feature>
<feature type="strand" evidence="20">
    <location>
        <begin position="239"/>
        <end position="244"/>
    </location>
</feature>
<feature type="helix" evidence="20">
    <location>
        <begin position="246"/>
        <end position="253"/>
    </location>
</feature>
<feature type="strand" evidence="20">
    <location>
        <begin position="268"/>
        <end position="272"/>
    </location>
</feature>
<feature type="turn" evidence="20">
    <location>
        <begin position="277"/>
        <end position="279"/>
    </location>
</feature>
<feature type="helix" evidence="20">
    <location>
        <begin position="280"/>
        <end position="302"/>
    </location>
</feature>
<feature type="strand" evidence="20">
    <location>
        <begin position="309"/>
        <end position="325"/>
    </location>
</feature>
<feature type="helix" evidence="20">
    <location>
        <begin position="326"/>
        <end position="339"/>
    </location>
</feature>
<feature type="helix" evidence="20">
    <location>
        <begin position="341"/>
        <end position="349"/>
    </location>
</feature>
<feature type="helix" evidence="20">
    <location>
        <begin position="354"/>
        <end position="360"/>
    </location>
</feature>
<feature type="helix" evidence="20">
    <location>
        <begin position="361"/>
        <end position="363"/>
    </location>
</feature>
<feature type="helix" evidence="20">
    <location>
        <begin position="369"/>
        <end position="375"/>
    </location>
</feature>
<feature type="strand" evidence="20">
    <location>
        <begin position="380"/>
        <end position="394"/>
    </location>
</feature>
<feature type="helix" evidence="20">
    <location>
        <begin position="406"/>
        <end position="410"/>
    </location>
</feature>
<feature type="strand" evidence="20">
    <location>
        <begin position="412"/>
        <end position="417"/>
    </location>
</feature>
<feature type="strand" evidence="20">
    <location>
        <begin position="423"/>
        <end position="425"/>
    </location>
</feature>
<feature type="strand" evidence="20">
    <location>
        <begin position="429"/>
        <end position="432"/>
    </location>
</feature>
<feature type="helix" evidence="20">
    <location>
        <begin position="438"/>
        <end position="449"/>
    </location>
</feature>
<feature type="strand" evidence="20">
    <location>
        <begin position="456"/>
        <end position="460"/>
    </location>
</feature>
<feature type="strand" evidence="20">
    <location>
        <begin position="469"/>
        <end position="471"/>
    </location>
</feature>
<feature type="helix" evidence="20">
    <location>
        <begin position="475"/>
        <end position="479"/>
    </location>
</feature>
<feature type="helix" evidence="20">
    <location>
        <begin position="482"/>
        <end position="500"/>
    </location>
</feature>
<feature type="strand" evidence="20">
    <location>
        <begin position="505"/>
        <end position="511"/>
    </location>
</feature>
<feature type="helix" evidence="20">
    <location>
        <begin position="519"/>
        <end position="521"/>
    </location>
</feature>
<feature type="strand" evidence="20">
    <location>
        <begin position="524"/>
        <end position="526"/>
    </location>
</feature>
<feature type="strand" evidence="20">
    <location>
        <begin position="529"/>
        <end position="533"/>
    </location>
</feature>
<feature type="turn" evidence="20">
    <location>
        <begin position="534"/>
        <end position="537"/>
    </location>
</feature>
<feature type="strand" evidence="20">
    <location>
        <begin position="538"/>
        <end position="542"/>
    </location>
</feature>
<feature type="helix" evidence="20">
    <location>
        <begin position="544"/>
        <end position="554"/>
    </location>
</feature>
<comment type="function">
    <text evidence="4 10 12">Is implicated in many functions such as ABA metabolism, hydrolysis of conjugated gibberellins, conversion of storage forms of cytokinins to active forms. Also acts in defense of young plant parts against pests via the production of hydroxamic acids from hydroxamic acid glucosides. Enzymatic activity is highly correlated with plant growth. The preferred substrate is DIMBOA-beta-D-glucoside. Hydrolyzes the chromogenic substrate 6-bromo-2-naphthyl-beta-D-glucoside (6BNGlc) and various artificial aryl beta-glucosides. No activity with cellobiose, arbutin, gentiobiose, linamarin or dhurrin as substrates.</text>
</comment>
<comment type="catalytic activity">
    <reaction evidence="4 12">
        <text>Hydrolysis of terminal, non-reducing beta-D-glucosyl residues with release of beta-D-glucose.</text>
        <dbReference type="EC" id="3.2.1.21"/>
    </reaction>
</comment>
<comment type="catalytic activity">
    <reaction evidence="4 12">
        <text>DIMBOA beta-D-glucoside + H2O = DIMBOA + D-glucose</text>
        <dbReference type="Rhea" id="RHEA:33975"/>
        <dbReference type="ChEBI" id="CHEBI:4167"/>
        <dbReference type="ChEBI" id="CHEBI:15377"/>
        <dbReference type="ChEBI" id="CHEBI:18048"/>
        <dbReference type="ChEBI" id="CHEBI:37573"/>
        <dbReference type="EC" id="3.2.1.182"/>
    </reaction>
</comment>
<comment type="catalytic activity">
    <reaction evidence="4 12">
        <text>DIBOA beta-D-glucoside + H2O = DIBOA + D-glucose</text>
        <dbReference type="Rhea" id="RHEA:33979"/>
        <dbReference type="ChEBI" id="CHEBI:4167"/>
        <dbReference type="ChEBI" id="CHEBI:15377"/>
        <dbReference type="ChEBI" id="CHEBI:63558"/>
        <dbReference type="ChEBI" id="CHEBI:63670"/>
        <dbReference type="EC" id="3.2.1.182"/>
    </reaction>
</comment>
<comment type="activity regulation">
    <text evidence="6 7">Reversibly inhibited by micromolar concentrations of Hg(2+) or Ag(+), but irreversibly inhibited by alkylation in presence of urea. Competitive inhibition by p-nitrophenyl beta-D-thioglucoside (pNPTGlc), glucotetrazole, and para-hydroxy-S-mandelonitrile beta-glucoside (dhurrin).</text>
</comment>
<comment type="biophysicochemical properties">
    <kinetics>
        <KM evidence="4 5 9 10 12">0.14 mM for 4-methylumbelliferyl beta-D-glucopyranoside (MUG)</KM>
        <KM evidence="4 5 9 10 12">0.64 mM for p-nitrophenyl beta-D-glucopyranoside (PNPG)</KM>
        <KM evidence="4 5 9 10 12">0.41 mM for p-nitrophenyl beta-D-glucopyranoside (PNPG) (with recombinant enzyme)</KM>
        <KM evidence="4 5 9 10 12">98 uM for DIMBOA-beta-D-glucoside</KM>
        <KM evidence="4 5 9 10 12">0.251 mM for n-octyl-beta-D-glucopyranoside</KM>
        <KM evidence="4 5 9 10 12">0.394 mM for p-nitrophenyl beta-D-xyloside</KM>
        <KM evidence="4 5 9 10 12">0.648 mM for p-nitrophenyl beta-D-fucopyranoside</KM>
        <KM evidence="4 5 9 10 12">0.674 mM for p-nitrophenyl beta-D-cellobioside</KM>
        <KM evidence="4 5 9 10 12">0.769 mM for p-nitrophenyl beta-D-mannopyranoside</KM>
        <KM evidence="4 5 9 10 12">1.64 mM for o-nitrophenyl beta-D-glucopyranoside</KM>
        <KM evidence="4 5 9 10 12">1.42 mM for o-nitrophenyl beta-D-glucopyranoside (with recombinant enzyme)</KM>
        <KM evidence="4 5 9 10 12">4.32 mM for p-nitrophenyl beta-D-galactopyranoside</KM>
        <Vmax evidence="4 5 9 10 12">225.4 umol/h/ug enzyme with p-nitrophenyl beta-D-glucopyranoside as substrate (with recombinant enzyme)</Vmax>
        <Vmax evidence="4 5 9 10 12">282.7 umol/h/ug enzyme with o-nitrophenyl beta-D-glucopyranoside as substrate (with recombinant enzyme)</Vmax>
    </kinetics>
    <phDependence>
        <text evidence="4 5 9 10 12">Optimum pH is 5.8.</text>
    </phDependence>
    <temperatureDependence>
        <text evidence="4 5 9 10 12">Optimum temperature is 50 degrees Celsius. Loses activity when is heated at 55 degrees Celsius.</text>
    </temperatureDependence>
</comment>
<comment type="subunit">
    <text evidence="4 6 7 8 9 10">Homo- and heterodimer.</text>
</comment>
<comment type="subcellular location">
    <subcellularLocation>
        <location>Plastid</location>
        <location>Chloroplast</location>
    </subcellularLocation>
</comment>
<comment type="tissue specificity">
    <text evidence="4">Expressed in all seedling parts. Most abundant in the coleoptile.</text>
</comment>
<comment type="similarity">
    <text evidence="13">Belongs to the glycosyl hydrolase 1 family.</text>
</comment>
<name>HGGL1_MAIZE</name>
<evidence type="ECO:0000250" key="1">
    <source>
        <dbReference type="UniProtKB" id="Q7XKV4"/>
    </source>
</evidence>
<evidence type="ECO:0000250" key="2">
    <source>
        <dbReference type="UniProtKB" id="Q9SPP9"/>
    </source>
</evidence>
<evidence type="ECO:0000256" key="3">
    <source>
        <dbReference type="SAM" id="MobiDB-lite"/>
    </source>
</evidence>
<evidence type="ECO:0000269" key="4">
    <source>
    </source>
</evidence>
<evidence type="ECO:0000269" key="5">
    <source>
    </source>
</evidence>
<evidence type="ECO:0000269" key="6">
    <source>
    </source>
</evidence>
<evidence type="ECO:0000269" key="7">
    <source>
    </source>
</evidence>
<evidence type="ECO:0000269" key="8">
    <source>
    </source>
</evidence>
<evidence type="ECO:0000269" key="9">
    <source>
    </source>
</evidence>
<evidence type="ECO:0000269" key="10">
    <source>
    </source>
</evidence>
<evidence type="ECO:0000269" key="11">
    <source ref="4"/>
</evidence>
<evidence type="ECO:0000269" key="12">
    <source ref="5"/>
</evidence>
<evidence type="ECO:0000305" key="13"/>
<evidence type="ECO:0000305" key="14">
    <source>
    </source>
</evidence>
<evidence type="ECO:0000305" key="15">
    <source>
    </source>
</evidence>
<evidence type="ECO:0007744" key="16">
    <source>
        <dbReference type="PDB" id="1E55"/>
    </source>
</evidence>
<evidence type="ECO:0007744" key="17">
    <source>
        <dbReference type="PDB" id="1E56"/>
    </source>
</evidence>
<evidence type="ECO:0007744" key="18">
    <source>
        <dbReference type="PDB" id="1H49"/>
    </source>
</evidence>
<evidence type="ECO:0007829" key="19">
    <source>
        <dbReference type="PDB" id="1E1E"/>
    </source>
</evidence>
<evidence type="ECO:0007829" key="20">
    <source>
        <dbReference type="PDB" id="1H49"/>
    </source>
</evidence>
<sequence>MAPLLAAAMNHAAAHPGLRSHLVGPNNESFSRHHLPSSSPQSSKRRCNLSFTTRSARVGSQNGVQMLSPSEIPQRDWFPSDFTFGAATSAYQIEGAWNEDGKGESNWDHFCHNHPERILDGSNSDIGANSYHMYKTDVRLLKEMGMDAYRFSISWPRILPKGTKEGGINPDGIKYYRNLINLLLENGIEPYVTIFHWDVPQALEEKYGGFLDKSHKSIVEDYTYFAKVCFDNFGDKVKNWLTFNEPQTFTSFSYGTGVFAPGRCSPGLDCAYPTGNSLVEPYTAGHNILLAHAEAVDLYNKHYKRDDTRIGLAFDVMGRVPYGTSFLDKQAEERSWDINLGWFLEPVVRGDYPFSMRSLARERLPFFKDEQKEKLAGSYNMLGLNYYTSRFSKNIDISPNYSPVLNTDDAYASQEVNGPDGKPIGPPMGNPWIYMYPEGLKDLLMIMKNKYGNPPIYITENGIGDVDTKETPLPMEAALNDYKRLDYIQRHIATLKESIDLGSNVQGYFAWSLLDNFEWFAGFTERYGIVYVDRNNNCTRYMKESAKWLKEFNTAKKPSKKILTPA</sequence>
<gene>
    <name type="primary">GLU1</name>
</gene>
<reference key="1">
    <citation type="submission" date="1995-04" db="EMBL/GenBank/DDBJ databases">
        <authorList>
            <person name="Esen A."/>
            <person name="Shahid M."/>
        </authorList>
    </citation>
    <scope>NUCLEOTIDE SEQUENCE [MRNA]</scope>
    <source>
        <strain>cv. Inbred line K55</strain>
        <tissue>Shoot</tissue>
    </source>
</reference>
<reference key="2">
    <citation type="journal article" date="1993" name="Science">
        <title>Release of active cytokinin by a beta-glucosidase localized to the maize root meristem.</title>
        <authorList>
            <person name="Brzobohaty B."/>
            <person name="Moore I."/>
            <person name="Kristoffersen P."/>
            <person name="Bako L."/>
            <person name="Campos N."/>
            <person name="Schell J."/>
            <person name="Palme K."/>
        </authorList>
    </citation>
    <scope>NUCLEOTIDE SEQUENCE [MRNA]</scope>
    <source>
        <strain>cv. MUTIN</strain>
        <tissue>Coleoptile</tissue>
    </source>
</reference>
<reference key="3">
    <citation type="journal article" date="1992" name="Plant Physiol.">
        <title>Purification and partial characterization of Maize (Zea Mays L.) beta-glucosidase.</title>
        <authorList>
            <person name="Esen A."/>
        </authorList>
    </citation>
    <scope>PROTEIN SEQUENCE OF 55-74</scope>
    <scope>FUNCTION</scope>
    <scope>SUBUNIT</scope>
    <scope>BIOPHYSICOCHEMICAL PROPERTIES</scope>
    <source>
        <strain>cv. Inbred line K55</strain>
    </source>
</reference>
<reference key="4">
    <citation type="journal article" date="1996" name="Theor. Appl. Genet.">
        <title>The maize two dimensional gel protein database: towards an integrated genome analysis program.</title>
        <authorList>
            <person name="Touzet P."/>
            <person name="Riccardi F."/>
            <person name="Morin C."/>
            <person name="Damerval C."/>
            <person name="Huet J.-C."/>
            <person name="Pernollet J.-C."/>
            <person name="Zivy M."/>
            <person name="de Vienne D."/>
        </authorList>
        <dbReference type="AGRICOLA" id="IND20551642"/>
    </citation>
    <scope>PROTEIN SEQUENCE OF 55-69; 165-174; 207-213 AND 217-235</scope>
    <source>
        <tissue>Coleoptile</tissue>
    </source>
</reference>
<reference key="5">
    <citation type="journal article" date="1994" name="Plant Sci.">
        <title>Substrate specificity of maize beta-glucosidase.</title>
        <authorList>
            <person name="Babcock G.D."/>
            <person name="Esen A."/>
        </authorList>
    </citation>
    <scope>FUNCTION</scope>
    <scope>CATALYTIC ACTIVITY</scope>
    <scope>SUBSTRATE SPECIFICITY</scope>
    <scope>BIOPHYSICOCHEMICAL PROPERTIES</scope>
</reference>
<reference key="6">
    <citation type="journal article" date="1999" name="Biotechnol. Bioeng.">
        <title>Expression of soluble and catalytically active plant (monocot) beta-glucosidases in E. coli.</title>
        <authorList>
            <person name="Cicek M."/>
            <person name="Esen A."/>
        </authorList>
    </citation>
    <scope>FUNCTION</scope>
    <scope>CATALYTIC ACTIVITY</scope>
    <scope>TISSUE SPECIFICITY</scope>
    <scope>SUBUNIT</scope>
    <scope>SUBSTRATE SPECIFICITY</scope>
    <scope>BIOPHYSICOCHEMICAL PROPERTIES</scope>
</reference>
<reference key="7">
    <citation type="journal article" date="1999" name="Protein Expr. Purif.">
        <title>Expression, single-step purification, and matrix-assisted refolding of a maize cytokinin glucoside-specific beta-glucosidase.</title>
        <authorList>
            <person name="Zouhar J."/>
            <person name="Nanak E."/>
            <person name="Brzobohaty B."/>
        </authorList>
    </citation>
    <scope>BIOPHYSICOCHEMICAL PROPERTIES</scope>
</reference>
<reference key="8">
    <citation type="journal article" date="2000" name="Proc. Natl. Acad. Sci. U.S.A.">
        <title>The mechanism of substrate (aglycone) specificity in beta -glucosidases is revealed by crystal structures of mutant maize beta -glucosidase-DIMBOA, -DIMBOAGlc, and -dhurrin complexes.</title>
        <authorList>
            <person name="Czjzek M."/>
            <person name="Cicek M."/>
            <person name="Zamboni V."/>
            <person name="Bevan D.R."/>
            <person name="Henrissat B."/>
            <person name="Esen A."/>
        </authorList>
    </citation>
    <scope>X-RAY CRYSTALLOGRAPHY (1.9 ANGSTROMS) OF 55-566 IN COMPLEX WITH SUBSTRATES AND THE INHIBITOR PARA-HYDROXY-S-MANDELONITRILE BETA-GLUCOSIDE</scope>
    <scope>MUTAGENESIS OF GLU-245</scope>
    <scope>ACTIVITY REGULATION</scope>
</reference>
<reference key="9">
    <citation type="journal article" date="2001" name="Biochem. J.">
        <title>Crystal structure of a monocotyledon (maize ZMGlu1) beta-glucosidase and a model of its complex with p-nitrophenyl beta-D-thioglucoside.</title>
        <authorList>
            <person name="Czjzek M."/>
            <person name="Cicek M."/>
            <person name="Zamboni V."/>
            <person name="Burmeister W.P."/>
            <person name="Bevan D.R."/>
            <person name="Henrissat B."/>
            <person name="Esen A."/>
        </authorList>
    </citation>
    <scope>X-RAY CRYSTALLOGRAPHY (2.5 ANGSTROMS) OF 55-566 IN COMPLEX WITH THE INHIBITOR P-NITROPHENYL BETA-D-THIOGLUCOSIDE</scope>
    <scope>ACTIVITY REGULATION</scope>
    <scope>HOMODIMER</scope>
    <scope>DISULFIDE BOND</scope>
</reference>
<reference key="10">
    <citation type="journal article" date="2001" name="Plant Physiol.">
        <title>Insights into the functional architecture of the catalytic center of a maize beta-glucosidase Zm-p60.1.</title>
        <authorList>
            <person name="Zouhar J."/>
            <person name="Vevodova J."/>
            <person name="Marek J."/>
            <person name="Damborsky J."/>
            <person name="Su X.-D."/>
            <person name="Brzobohaty B."/>
        </authorList>
    </citation>
    <scope>X-RAY CRYSTALLOGRAPHY (2.05 ANGSTROMS) OF 60-566</scope>
    <scope>MUTAGENESIS OF GLU-245; PHE-252; MET-317; GLU-460 AND ILE-463</scope>
    <scope>SUBUNIT</scope>
    <scope>DISULFIDE BOND</scope>
</reference>
<reference key="11">
    <citation type="journal article" date="2003" name="J. Biol. Chem.">
        <title>Mutational and structural analysis of aglycone specificity in maize and sorghum beta-glucosidases.</title>
        <authorList>
            <person name="Verdoucq L."/>
            <person name="Czjzek M."/>
            <person name="Moriniere J."/>
            <person name="Bevan D.R."/>
            <person name="Esen A."/>
        </authorList>
    </citation>
    <scope>X-RAY CRYSTALLOGRAPHY (1.90 ANGSTROMS) OF 55-566 IN COMPLEX WITH SUBSTRATE</scope>
    <scope>DISULFIDE BOND</scope>
</reference>
<reference key="12">
    <citation type="journal article" date="2004" name="J. Biol. Chem.">
        <title>Structural determinants of substrate specificity in family 1 beta-glucosidases: novel insights from the crystal structure of sorghum dhurrinase-1, a plant beta-glucosidase with strict specificity, in complex with its natural substrate.</title>
        <authorList>
            <person name="Verdoucq L."/>
            <person name="Moriniere J."/>
            <person name="Bevan D.R."/>
            <person name="Esen A."/>
            <person name="Vasella A."/>
            <person name="Henrissat B."/>
            <person name="Czjzek M."/>
        </authorList>
    </citation>
    <scope>X-RAY CRYSTALLOGRAPHY (1.9 ANGSTROMS) OF 55-566 IN COMPLEX WITH SUBSTRATES AND THE INHIBITOR GLUCOTETRAZOLE</scope>
    <scope>MUTAGENESIS OF GLU-245</scope>
    <scope>BIOPHYSICOCHEMICAL PROPERTIES</scope>
    <scope>DISULFIDE BOND</scope>
</reference>
<protein>
    <recommendedName>
        <fullName>4-hydroxy-7-methoxy-3-oxo-3,4-dihydro-2H-1,4-benzoxazin-2-yl glucoside beta-D-glucosidase 1, chloroplastic</fullName>
        <ecNumber evidence="4 12">3.2.1.182</ecNumber>
    </recommendedName>
    <alternativeName>
        <fullName>Beta-D-glucoside glucohydrolase</fullName>
    </alternativeName>
    <alternativeName>
        <fullName>Beta-glucosidase 1</fullName>
        <shortName>ZmGlu1</shortName>
        <ecNumber evidence="4 12">3.2.1.21</ecNumber>
    </alternativeName>
</protein>
<accession>P49235</accession>
<dbReference type="EC" id="3.2.1.182" evidence="4 12"/>
<dbReference type="EC" id="3.2.1.21" evidence="4 12"/>
<dbReference type="EMBL" id="U25157">
    <property type="protein sequence ID" value="AAA65946.1"/>
    <property type="molecule type" value="mRNA"/>
</dbReference>
<dbReference type="EMBL" id="X74217">
    <property type="protein sequence ID" value="CAA52293.1"/>
    <property type="molecule type" value="mRNA"/>
</dbReference>
<dbReference type="PIR" id="A48860">
    <property type="entry name" value="A48860"/>
</dbReference>
<dbReference type="RefSeq" id="NP_001105454.1">
    <property type="nucleotide sequence ID" value="NM_001111984.1"/>
</dbReference>
<dbReference type="PDB" id="1E1E">
    <property type="method" value="X-ray"/>
    <property type="resolution" value="2.50 A"/>
    <property type="chains" value="A/B=55-566"/>
</dbReference>
<dbReference type="PDB" id="1E1F">
    <property type="method" value="X-ray"/>
    <property type="resolution" value="2.60 A"/>
    <property type="chains" value="A/B=55-566"/>
</dbReference>
<dbReference type="PDB" id="1E4L">
    <property type="method" value="X-ray"/>
    <property type="resolution" value="2.20 A"/>
    <property type="chains" value="A/B=55-566"/>
</dbReference>
<dbReference type="PDB" id="1E4N">
    <property type="method" value="X-ray"/>
    <property type="resolution" value="2.10 A"/>
    <property type="chains" value="A/B=55-566"/>
</dbReference>
<dbReference type="PDB" id="1E55">
    <property type="method" value="X-ray"/>
    <property type="resolution" value="2.00 A"/>
    <property type="chains" value="A/B=55-566"/>
</dbReference>
<dbReference type="PDB" id="1E56">
    <property type="method" value="X-ray"/>
    <property type="resolution" value="2.10 A"/>
    <property type="chains" value="A/B=55-566"/>
</dbReference>
<dbReference type="PDB" id="1H49">
    <property type="method" value="X-ray"/>
    <property type="resolution" value="1.90 A"/>
    <property type="chains" value="A/B=55-566"/>
</dbReference>
<dbReference type="PDB" id="1HXJ">
    <property type="method" value="X-ray"/>
    <property type="resolution" value="2.05 A"/>
    <property type="chains" value="A/B=60-566"/>
</dbReference>
<dbReference type="PDB" id="1V08">
    <property type="method" value="X-ray"/>
    <property type="resolution" value="1.90 A"/>
    <property type="chains" value="A/B=55-566"/>
</dbReference>
<dbReference type="PDBsum" id="1E1E"/>
<dbReference type="PDBsum" id="1E1F"/>
<dbReference type="PDBsum" id="1E4L"/>
<dbReference type="PDBsum" id="1E4N"/>
<dbReference type="PDBsum" id="1E55"/>
<dbReference type="PDBsum" id="1E56"/>
<dbReference type="PDBsum" id="1H49"/>
<dbReference type="PDBsum" id="1HXJ"/>
<dbReference type="PDBsum" id="1V08"/>
<dbReference type="SMR" id="P49235"/>
<dbReference type="STRING" id="4577.P49235"/>
<dbReference type="CAZy" id="GH1">
    <property type="family name" value="Glycoside Hydrolase Family 1"/>
</dbReference>
<dbReference type="PaxDb" id="4577-GRMZM2G016890_P01"/>
<dbReference type="ProMEX" id="P49235"/>
<dbReference type="EnsemblPlants" id="Zm00001eb411380_T001">
    <property type="protein sequence ID" value="Zm00001eb411380_P001"/>
    <property type="gene ID" value="Zm00001eb411380"/>
</dbReference>
<dbReference type="Gramene" id="Zm00001eb411380_T001">
    <property type="protein sequence ID" value="Zm00001eb411380_P001"/>
    <property type="gene ID" value="Zm00001eb411380"/>
</dbReference>
<dbReference type="MaizeGDB" id="13870"/>
<dbReference type="eggNOG" id="KOG0626">
    <property type="taxonomic scope" value="Eukaryota"/>
</dbReference>
<dbReference type="InParanoid" id="P49235"/>
<dbReference type="OMA" id="NNNCTRY"/>
<dbReference type="OrthoDB" id="774279at2759"/>
<dbReference type="BioCyc" id="MetaCyc:MONOMER-10621"/>
<dbReference type="BRENDA" id="3.2.1.182">
    <property type="organism ID" value="6752"/>
</dbReference>
<dbReference type="BRENDA" id="3.2.1.21">
    <property type="organism ID" value="6752"/>
</dbReference>
<dbReference type="SABIO-RK" id="P49235"/>
<dbReference type="EvolutionaryTrace" id="P49235"/>
<dbReference type="Proteomes" id="UP000007305">
    <property type="component" value="Chromosome 10"/>
</dbReference>
<dbReference type="ExpressionAtlas" id="P49235">
    <property type="expression patterns" value="baseline and differential"/>
</dbReference>
<dbReference type="GO" id="GO:0009507">
    <property type="term" value="C:chloroplast"/>
    <property type="evidence" value="ECO:0007669"/>
    <property type="project" value="UniProtKB-SubCell"/>
</dbReference>
<dbReference type="GO" id="GO:0008422">
    <property type="term" value="F:beta-glucosidase activity"/>
    <property type="evidence" value="ECO:0000314"/>
    <property type="project" value="UniProtKB"/>
</dbReference>
<dbReference type="GO" id="GO:0016162">
    <property type="term" value="F:cellulose 1,4-beta-cellobiosidase activity"/>
    <property type="evidence" value="ECO:0000314"/>
    <property type="project" value="UniProtKB"/>
</dbReference>
<dbReference type="GO" id="GO:0102726">
    <property type="term" value="F:DIMBOA glucoside beta-D-glucosidase activity"/>
    <property type="evidence" value="ECO:0007669"/>
    <property type="project" value="UniProtKB-EC"/>
</dbReference>
<dbReference type="GO" id="GO:0015928">
    <property type="term" value="F:fucosidase activity"/>
    <property type="evidence" value="ECO:0000314"/>
    <property type="project" value="UniProtKB"/>
</dbReference>
<dbReference type="GO" id="GO:0015925">
    <property type="term" value="F:galactosidase activity"/>
    <property type="evidence" value="ECO:0000314"/>
    <property type="project" value="UniProtKB"/>
</dbReference>
<dbReference type="GO" id="GO:0015923">
    <property type="term" value="F:mannosidase activity"/>
    <property type="evidence" value="ECO:0000314"/>
    <property type="project" value="UniProtKB"/>
</dbReference>
<dbReference type="GO" id="GO:0097599">
    <property type="term" value="F:xylanase activity"/>
    <property type="evidence" value="ECO:0000314"/>
    <property type="project" value="UniProtKB"/>
</dbReference>
<dbReference type="GO" id="GO:0005975">
    <property type="term" value="P:carbohydrate metabolic process"/>
    <property type="evidence" value="ECO:0007669"/>
    <property type="project" value="InterPro"/>
</dbReference>
<dbReference type="GO" id="GO:0009736">
    <property type="term" value="P:cytokinin-activated signaling pathway"/>
    <property type="evidence" value="ECO:0007669"/>
    <property type="project" value="UniProtKB-KW"/>
</dbReference>
<dbReference type="FunFam" id="3.20.20.80:FF:000041">
    <property type="entry name" value="Beta-glucosidase 7"/>
    <property type="match status" value="1"/>
</dbReference>
<dbReference type="Gene3D" id="3.20.20.80">
    <property type="entry name" value="Glycosidases"/>
    <property type="match status" value="1"/>
</dbReference>
<dbReference type="InterPro" id="IPR001360">
    <property type="entry name" value="Glyco_hydro_1"/>
</dbReference>
<dbReference type="InterPro" id="IPR018120">
    <property type="entry name" value="Glyco_hydro_1_AS"/>
</dbReference>
<dbReference type="InterPro" id="IPR033132">
    <property type="entry name" value="Glyco_hydro_1_N_CS"/>
</dbReference>
<dbReference type="InterPro" id="IPR017853">
    <property type="entry name" value="Glycoside_hydrolase_SF"/>
</dbReference>
<dbReference type="PANTHER" id="PTHR10353:SF326">
    <property type="entry name" value="4-HYDROXY-7-METHOXY-3-OXO-3,4-DIHYDRO-2H-1,4-BENZOXAZIN-2-YL GLUCOSIDE BETA-D-GLUCOSIDASE 1, CHLOROPLASTIC"/>
    <property type="match status" value="1"/>
</dbReference>
<dbReference type="PANTHER" id="PTHR10353">
    <property type="entry name" value="GLYCOSYL HYDROLASE"/>
    <property type="match status" value="1"/>
</dbReference>
<dbReference type="Pfam" id="PF00232">
    <property type="entry name" value="Glyco_hydro_1"/>
    <property type="match status" value="1"/>
</dbReference>
<dbReference type="PRINTS" id="PR00131">
    <property type="entry name" value="GLHYDRLASE1"/>
</dbReference>
<dbReference type="SUPFAM" id="SSF51445">
    <property type="entry name" value="(Trans)glycosidases"/>
    <property type="match status" value="1"/>
</dbReference>
<dbReference type="PROSITE" id="PS00572">
    <property type="entry name" value="GLYCOSYL_HYDROL_F1_1"/>
    <property type="match status" value="1"/>
</dbReference>
<dbReference type="PROSITE" id="PS00653">
    <property type="entry name" value="GLYCOSYL_HYDROL_F1_2"/>
    <property type="match status" value="1"/>
</dbReference>
<keyword id="KW-0002">3D-structure</keyword>
<keyword id="KW-0150">Chloroplast</keyword>
<keyword id="KW-0932">Cytokinin signaling pathway</keyword>
<keyword id="KW-0903">Direct protein sequencing</keyword>
<keyword id="KW-1015">Disulfide bond</keyword>
<keyword id="KW-0326">Glycosidase</keyword>
<keyword id="KW-0378">Hydrolase</keyword>
<keyword id="KW-0934">Plastid</keyword>
<keyword id="KW-1185">Reference proteome</keyword>
<keyword id="KW-0809">Transit peptide</keyword>
<organism>
    <name type="scientific">Zea mays</name>
    <name type="common">Maize</name>
    <dbReference type="NCBI Taxonomy" id="4577"/>
    <lineage>
        <taxon>Eukaryota</taxon>
        <taxon>Viridiplantae</taxon>
        <taxon>Streptophyta</taxon>
        <taxon>Embryophyta</taxon>
        <taxon>Tracheophyta</taxon>
        <taxon>Spermatophyta</taxon>
        <taxon>Magnoliopsida</taxon>
        <taxon>Liliopsida</taxon>
        <taxon>Poales</taxon>
        <taxon>Poaceae</taxon>
        <taxon>PACMAD clade</taxon>
        <taxon>Panicoideae</taxon>
        <taxon>Andropogonodae</taxon>
        <taxon>Andropogoneae</taxon>
        <taxon>Tripsacinae</taxon>
        <taxon>Zea</taxon>
    </lineage>
</organism>